<proteinExistence type="evidence at protein level"/>
<dbReference type="EMBL" id="X89721">
    <property type="protein sequence ID" value="CAA61872.1"/>
    <property type="molecule type" value="Genomic_DNA"/>
</dbReference>
<dbReference type="EMBL" id="X97918">
    <property type="protein sequence ID" value="CAA66546.1"/>
    <property type="molecule type" value="Genomic_DNA"/>
</dbReference>
<dbReference type="PIR" id="S58144">
    <property type="entry name" value="S58144"/>
</dbReference>
<dbReference type="RefSeq" id="NP_690676.1">
    <property type="nucleotide sequence ID" value="NC_004166.2"/>
</dbReference>
<dbReference type="PDB" id="2KBZ">
    <property type="method" value="NMR"/>
    <property type="chains" value="A=4-102"/>
</dbReference>
<dbReference type="PDB" id="5A20">
    <property type="method" value="EM"/>
    <property type="resolution" value="7.60 A"/>
    <property type="chains" value="C/D=1-102"/>
</dbReference>
<dbReference type="PDB" id="5A21">
    <property type="method" value="EM"/>
    <property type="resolution" value="7.20 A"/>
    <property type="chains" value="C/D=1-102"/>
</dbReference>
<dbReference type="PDB" id="7Z4W">
    <property type="method" value="EM"/>
    <property type="resolution" value="2.70 A"/>
    <property type="chains" value="a/b/c/d/e/f/g/h/i/j/k/l=1-102"/>
</dbReference>
<dbReference type="PDBsum" id="2KBZ"/>
<dbReference type="PDBsum" id="5A20"/>
<dbReference type="PDBsum" id="5A21"/>
<dbReference type="PDBsum" id="7Z4W"/>
<dbReference type="EMDB" id="EMD-14509"/>
<dbReference type="EMDB" id="EMD-2993"/>
<dbReference type="EMDB" id="EMD-2994"/>
<dbReference type="SMR" id="Q38584"/>
<dbReference type="KEGG" id="vg:955305"/>
<dbReference type="EvolutionaryTrace" id="Q38584"/>
<dbReference type="Proteomes" id="UP000002559">
    <property type="component" value="Genome"/>
</dbReference>
<dbReference type="GO" id="GO:0044423">
    <property type="term" value="C:virion component"/>
    <property type="evidence" value="ECO:0007669"/>
    <property type="project" value="UniProtKB-KW"/>
</dbReference>
<dbReference type="GO" id="GO:0099001">
    <property type="term" value="P:symbiont genome ejection through host cell envelope, long flexible tail mechanism"/>
    <property type="evidence" value="ECO:0007669"/>
    <property type="project" value="UniProtKB-KW"/>
</dbReference>
<dbReference type="CDD" id="cd08051">
    <property type="entry name" value="gp6_gp15_like"/>
    <property type="match status" value="1"/>
</dbReference>
<dbReference type="Gene3D" id="1.10.246.150">
    <property type="match status" value="1"/>
</dbReference>
<dbReference type="InterPro" id="IPR047186">
    <property type="entry name" value="Gp6_gp15-like"/>
</dbReference>
<dbReference type="InterPro" id="IPR021146">
    <property type="entry name" value="Phage_gp6-like_head-tail"/>
</dbReference>
<dbReference type="InterPro" id="IPR053746">
    <property type="entry name" value="Viral_HT_Connector_Assembly"/>
</dbReference>
<dbReference type="Pfam" id="PF05135">
    <property type="entry name" value="Phage_connect_1"/>
    <property type="match status" value="1"/>
</dbReference>
<organism>
    <name type="scientific">Bacillus phage SPP1</name>
    <name type="common">Bacteriophage SPP1</name>
    <dbReference type="NCBI Taxonomy" id="10724"/>
    <lineage>
        <taxon>Viruses</taxon>
        <taxon>Duplodnaviria</taxon>
        <taxon>Heunggongvirae</taxon>
        <taxon>Uroviricota</taxon>
        <taxon>Caudoviricetes</taxon>
    </lineage>
</organism>
<sequence length="102" mass="11614">MDIQRVKRLLSITNDKHDEYLTEMVPLLVEFAKDECHNPFIDKDGNESIPSGVLIFVAKAAQFYMTNAGLTGRSMDTVSYNFATEIPSTILKKLNPYRKMAR</sequence>
<feature type="chain" id="PRO_0000438140" description="Head completion protein gp15">
    <location>
        <begin position="1"/>
        <end position="102"/>
    </location>
</feature>
<feature type="helix" evidence="9">
    <location>
        <begin position="3"/>
        <end position="9"/>
    </location>
</feature>
<feature type="turn" evidence="8">
    <location>
        <begin position="11"/>
        <end position="17"/>
    </location>
</feature>
<feature type="helix" evidence="9">
    <location>
        <begin position="18"/>
        <end position="36"/>
    </location>
</feature>
<feature type="helix" evidence="9">
    <location>
        <begin position="51"/>
        <end position="63"/>
    </location>
</feature>
<feature type="strand" evidence="9">
    <location>
        <begin position="70"/>
        <end position="75"/>
    </location>
</feature>
<feature type="strand" evidence="9">
    <location>
        <begin position="78"/>
        <end position="82"/>
    </location>
</feature>
<feature type="helix" evidence="9">
    <location>
        <begin position="88"/>
        <end position="91"/>
    </location>
</feature>
<feature type="helix" evidence="9">
    <location>
        <begin position="92"/>
        <end position="97"/>
    </location>
</feature>
<accession>Q38584</accession>
<reference key="1">
    <citation type="journal article" date="1997" name="J. Mol. Biol.">
        <title>Head morphogenesis genes of the Bacillus subtilis bacteriophage SPP1.</title>
        <authorList>
            <person name="Becker B."/>
            <person name="de la Fuente N."/>
            <person name="Gassel M."/>
            <person name="Guenther D."/>
            <person name="Tavares P."/>
            <person name="Lurz R."/>
            <person name="Trautner T.A."/>
            <person name="Alonso J.C."/>
        </authorList>
    </citation>
    <scope>NUCLEOTIDE SEQUENCE [GENOMIC DNA]</scope>
</reference>
<reference key="2">
    <citation type="journal article" date="1997" name="Gene">
        <title>The complete nucleotide sequence and functional organization of Bacillus subtilis bacteriophage SPP1.</title>
        <authorList>
            <person name="Alonso J.C."/>
            <person name="Luder G."/>
            <person name="Stiege A.C."/>
            <person name="Chai S."/>
            <person name="Weise F."/>
            <person name="Trautner T.A."/>
        </authorList>
    </citation>
    <scope>NUCLEOTIDE SEQUENCE [LARGE SCALE GENOMIC DNA]</scope>
</reference>
<reference evidence="5" key="3">
    <citation type="journal article" date="2009" name="Proc. Natl. Acad. Sci. U.S.A.">
        <title>Structure of bacteriophage SPP1 head-to-tail connection reveals mechanism for viral DNA gating.</title>
        <authorList>
            <person name="Lhuillier S."/>
            <person name="Gallopin M."/>
            <person name="Gilquin B."/>
            <person name="Brasiles S."/>
            <person name="Lancelot N."/>
            <person name="Letellier G."/>
            <person name="Gilles M."/>
            <person name="Dethan G."/>
            <person name="Orlova E.V."/>
            <person name="Couprie J."/>
            <person name="Tavares P."/>
            <person name="Zinn-Justin S."/>
        </authorList>
    </citation>
    <scope>STRUCTURE BY NMR OF 4-102</scope>
</reference>
<reference evidence="6 7" key="4">
    <citation type="journal article" date="2015" name="Proc. Natl. Acad. Sci. U.S.A.">
        <title>Structural rearrangements in the phage head-to-tail interface during assembly and infection.</title>
        <authorList>
            <person name="Chaban Y."/>
            <person name="Lurz R."/>
            <person name="Brasiles S."/>
            <person name="Cornilleau C."/>
            <person name="Karreman M."/>
            <person name="Zinn-Justin S."/>
            <person name="Tavares P."/>
            <person name="Orlova E.V."/>
        </authorList>
    </citation>
    <scope>STRUCTURE BY ELECTRON MICROSCOPY (7.20 ANGSTROMS)</scope>
    <scope>INTERACTION WITH THE STOPPER GP16</scope>
    <scope>INTERACTION WITH THE PORTAL PROTEIN</scope>
    <scope>SUBUNIT</scope>
    <scope>SUBCELLULAR LOCATION</scope>
    <scope>FUNCTION</scope>
</reference>
<protein>
    <recommendedName>
        <fullName evidence="2">Head completion protein gp15</fullName>
        <shortName>HCP</shortName>
    </recommendedName>
    <alternativeName>
        <fullName evidence="4">Connector protein gp15</fullName>
    </alternativeName>
    <alternativeName>
        <fullName>Gene product 15</fullName>
        <shortName>Gp15</shortName>
    </alternativeName>
</protein>
<comment type="function">
    <text evidence="3">Head completion protein that exhibits an open central channel for viral DNA ejection. Part of the head-tail connector by binding to the portal protein and to the head completion protein 16.</text>
</comment>
<comment type="subunit">
    <text evidence="1">Homododecamer. Interacts with the stopper protein gp16. Interacts with the portal protein; this interaction occurs at the end of the packaging when the terminase complex is replaced by the connector.</text>
</comment>
<comment type="subcellular location">
    <subcellularLocation>
        <location evidence="1">Virion</location>
    </subcellularLocation>
    <text evidence="1">Part of the connector between the portal and the tail.</text>
</comment>
<comment type="similarity">
    <text evidence="2">Belongs to the Caudoviricetes gp6/gp15 head completion protein family.</text>
</comment>
<keyword id="KW-0002">3D-structure</keyword>
<keyword id="KW-1185">Reference proteome</keyword>
<keyword id="KW-1171">Viral genome ejection through host cell envelope</keyword>
<keyword id="KW-1243">Viral long flexible tail ejection system</keyword>
<keyword id="KW-1162">Viral penetration into host cytoplasm</keyword>
<keyword id="KW-0946">Virion</keyword>
<keyword id="KW-1160">Virus entry into host cell</keyword>
<evidence type="ECO:0000269" key="1">
    <source>
    </source>
</evidence>
<evidence type="ECO:0000305" key="2"/>
<evidence type="ECO:0000305" key="3">
    <source>
    </source>
</evidence>
<evidence type="ECO:0000312" key="4">
    <source>
        <dbReference type="EMBL" id="CAA61872.1"/>
    </source>
</evidence>
<evidence type="ECO:0007744" key="5">
    <source>
        <dbReference type="PDB" id="2KBZ"/>
    </source>
</evidence>
<evidence type="ECO:0007744" key="6">
    <source>
        <dbReference type="PDB" id="5A20"/>
    </source>
</evidence>
<evidence type="ECO:0007744" key="7">
    <source>
        <dbReference type="PDB" id="5A21"/>
    </source>
</evidence>
<evidence type="ECO:0007829" key="8">
    <source>
        <dbReference type="PDB" id="2KBZ"/>
    </source>
</evidence>
<evidence type="ECO:0007829" key="9">
    <source>
        <dbReference type="PDB" id="7Z4W"/>
    </source>
</evidence>
<name>HCP15_BPSPP</name>
<gene>
    <name evidence="4" type="primary">15</name>
</gene>
<organismHost>
    <name type="scientific">Bacillus subtilis</name>
    <dbReference type="NCBI Taxonomy" id="1423"/>
</organismHost>